<dbReference type="EMBL" id="AE013598">
    <property type="protein sequence ID" value="AAW77003.1"/>
    <property type="molecule type" value="Genomic_DNA"/>
</dbReference>
<dbReference type="BMRB" id="Q5GWB8"/>
<dbReference type="SMR" id="Q5GWB8"/>
<dbReference type="STRING" id="291331.XOO3749"/>
<dbReference type="KEGG" id="xoo:XOO3749"/>
<dbReference type="HOGENOM" id="CLU_128074_0_0_6"/>
<dbReference type="Proteomes" id="UP000006735">
    <property type="component" value="Chromosome"/>
</dbReference>
<dbReference type="GO" id="GO:0070987">
    <property type="term" value="P:error-free translesion synthesis"/>
    <property type="evidence" value="ECO:0007669"/>
    <property type="project" value="TreeGrafter"/>
</dbReference>
<dbReference type="Gene3D" id="2.60.40.1470">
    <property type="entry name" value="ApaG domain"/>
    <property type="match status" value="1"/>
</dbReference>
<dbReference type="HAMAP" id="MF_00791">
    <property type="entry name" value="ApaG"/>
    <property type="match status" value="1"/>
</dbReference>
<dbReference type="InterPro" id="IPR007474">
    <property type="entry name" value="ApaG_domain"/>
</dbReference>
<dbReference type="InterPro" id="IPR036767">
    <property type="entry name" value="ApaG_sf"/>
</dbReference>
<dbReference type="InterPro" id="IPR023065">
    <property type="entry name" value="Uncharacterised_ApaG"/>
</dbReference>
<dbReference type="NCBIfam" id="NF003967">
    <property type="entry name" value="PRK05461.1"/>
    <property type="match status" value="1"/>
</dbReference>
<dbReference type="PANTHER" id="PTHR14289">
    <property type="entry name" value="F-BOX ONLY PROTEIN 3"/>
    <property type="match status" value="1"/>
</dbReference>
<dbReference type="PANTHER" id="PTHR14289:SF16">
    <property type="entry name" value="POLYMERASE DELTA-INTERACTING PROTEIN 2"/>
    <property type="match status" value="1"/>
</dbReference>
<dbReference type="Pfam" id="PF04379">
    <property type="entry name" value="DUF525"/>
    <property type="match status" value="1"/>
</dbReference>
<dbReference type="SUPFAM" id="SSF110069">
    <property type="entry name" value="ApaG-like"/>
    <property type="match status" value="1"/>
</dbReference>
<dbReference type="PROSITE" id="PS51087">
    <property type="entry name" value="APAG"/>
    <property type="match status" value="1"/>
</dbReference>
<organism>
    <name type="scientific">Xanthomonas oryzae pv. oryzae (strain KACC10331 / KXO85)</name>
    <dbReference type="NCBI Taxonomy" id="291331"/>
    <lineage>
        <taxon>Bacteria</taxon>
        <taxon>Pseudomonadati</taxon>
        <taxon>Pseudomonadota</taxon>
        <taxon>Gammaproteobacteria</taxon>
        <taxon>Lysobacterales</taxon>
        <taxon>Lysobacteraceae</taxon>
        <taxon>Xanthomonas</taxon>
    </lineage>
</organism>
<protein>
    <recommendedName>
        <fullName evidence="1">Protein ApaG</fullName>
    </recommendedName>
</protein>
<accession>Q5GWB8</accession>
<proteinExistence type="inferred from homology"/>
<reference key="1">
    <citation type="journal article" date="2005" name="Nucleic Acids Res.">
        <title>The genome sequence of Xanthomonas oryzae pathovar oryzae KACC10331, the bacterial blight pathogen of rice.</title>
        <authorList>
            <person name="Lee B.-M."/>
            <person name="Park Y.-J."/>
            <person name="Park D.-S."/>
            <person name="Kang H.-W."/>
            <person name="Kim J.-G."/>
            <person name="Song E.-S."/>
            <person name="Park I.-C."/>
            <person name="Yoon U.-H."/>
            <person name="Hahn J.-H."/>
            <person name="Koo B.-S."/>
            <person name="Lee G.-B."/>
            <person name="Kim H."/>
            <person name="Park H.-S."/>
            <person name="Yoon K.-O."/>
            <person name="Kim J.-H."/>
            <person name="Jung C.-H."/>
            <person name="Koh N.-H."/>
            <person name="Seo J.-S."/>
            <person name="Go S.-J."/>
        </authorList>
    </citation>
    <scope>NUCLEOTIDE SEQUENCE [LARGE SCALE GENOMIC DNA]</scope>
    <source>
        <strain>KACC10331 / KXO85</strain>
    </source>
</reference>
<keyword id="KW-1185">Reference proteome</keyword>
<gene>
    <name evidence="1" type="primary">apaG</name>
    <name type="ordered locus">XOO3749</name>
</gene>
<feature type="chain" id="PRO_1000083671" description="Protein ApaG">
    <location>
        <begin position="1"/>
        <end position="127"/>
    </location>
</feature>
<feature type="domain" description="ApaG" evidence="1">
    <location>
        <begin position="3"/>
        <end position="127"/>
    </location>
</feature>
<name>APAG_XANOR</name>
<evidence type="ECO:0000255" key="1">
    <source>
        <dbReference type="HAMAP-Rule" id="MF_00791"/>
    </source>
</evidence>
<sequence length="127" mass="14175">MHDDPRYRVEVEVSPRFLAHQSTPDEGRYAFAYSIRIQNAGAVPARLIARHWQITDGNGRTEQVDGEGVVGEQPRLRPGEAFHYTSGVLLETEQGQMQGHYDMVADDGTEFIAPIAAFVLSVPRTLH</sequence>